<name>ELAD_ECO57</name>
<gene>
    <name type="primary">elaD</name>
    <name type="ordered locus">Z3529</name>
    <name type="ordered locus">ECs3157</name>
</gene>
<sequence>MMVTVVSNYCQLSQTQLSQTFAEKFTVTEELLQSLKKTALSGDEESIELLHNIALGYDEFGKKAEDILYHIVRNPTNDTLSIIKLIKNACLKLYNLAHTATKHPLKSHDSDNLLFKKLFSPSKLMAIIGEDIPLISEKQSLSKVLLNDKNNELSDGTNFWDKNRQLTTDEIACYLKKIAANAKNTQVNYPTDFYLPNSNSTYLEVALNDNIKSDPSWPKEVQLFPINTGGHWILVSLQKIVNEKNNTQQIKCIIFNSLRALGHEKENSLKRIINSFNSFNCDPTRETPNNKNITDHLTEPEIIFLHADLQQYLSQSCGAFVCMAAQEVIEQMESNSDSAPYTLLKNYADRFKKYSAEEQYEIDFQHRLENRNCYLDKYGDANINHYYRNLEIKNSHPKNRASSKRVS</sequence>
<keyword id="KW-0378">Hydrolase</keyword>
<keyword id="KW-0645">Protease</keyword>
<keyword id="KW-1185">Reference proteome</keyword>
<keyword id="KW-0788">Thiol protease</keyword>
<accession>Q8XCY9</accession>
<accession>Q7AC13</accession>
<protein>
    <recommendedName>
        <fullName evidence="2">Protease ElaD</fullName>
        <ecNumber evidence="2">3.4.22.-</ecNumber>
    </recommendedName>
    <alternativeName>
        <fullName evidence="2">Deubiquitinase</fullName>
    </alternativeName>
    <alternativeName>
        <fullName evidence="2">Deubiquitinating enzyme</fullName>
        <shortName evidence="2">DUB</shortName>
    </alternativeName>
    <alternativeName>
        <fullName evidence="2">Deubiquitinating protease</fullName>
    </alternativeName>
</protein>
<proteinExistence type="inferred from homology"/>
<feature type="chain" id="PRO_0000323569" description="Protease ElaD">
    <location>
        <begin position="1"/>
        <end position="407"/>
    </location>
</feature>
<feature type="active site" evidence="1">
    <location>
        <position position="231"/>
    </location>
</feature>
<feature type="active site" description="Nucleophile" evidence="1">
    <location>
        <position position="317"/>
    </location>
</feature>
<evidence type="ECO:0000250" key="1"/>
<evidence type="ECO:0000250" key="2">
    <source>
        <dbReference type="UniProtKB" id="Q47013"/>
    </source>
</evidence>
<evidence type="ECO:0000305" key="3"/>
<dbReference type="EC" id="3.4.22.-" evidence="2"/>
<dbReference type="EMBL" id="AE005174">
    <property type="protein sequence ID" value="AAG57402.1"/>
    <property type="molecule type" value="Genomic_DNA"/>
</dbReference>
<dbReference type="EMBL" id="BA000007">
    <property type="protein sequence ID" value="BAB36580.2"/>
    <property type="status" value="ALT_INIT"/>
    <property type="molecule type" value="Genomic_DNA"/>
</dbReference>
<dbReference type="PIR" id="E91023">
    <property type="entry name" value="E91023"/>
</dbReference>
<dbReference type="PIR" id="F85867">
    <property type="entry name" value="F85867"/>
</dbReference>
<dbReference type="RefSeq" id="NP_311184.1">
    <property type="nucleotide sequence ID" value="NC_002695.1"/>
</dbReference>
<dbReference type="RefSeq" id="WP_000989824.1">
    <property type="nucleotide sequence ID" value="NZ_VOAI01000001.1"/>
</dbReference>
<dbReference type="SMR" id="Q8XCY9"/>
<dbReference type="STRING" id="155864.Z3529"/>
<dbReference type="MEROPS" id="C79.001"/>
<dbReference type="GeneID" id="916865"/>
<dbReference type="KEGG" id="ece:Z3529"/>
<dbReference type="KEGG" id="ecs:ECs_3157"/>
<dbReference type="PATRIC" id="fig|386585.9.peg.3295"/>
<dbReference type="eggNOG" id="COG5160">
    <property type="taxonomic scope" value="Bacteria"/>
</dbReference>
<dbReference type="HOGENOM" id="CLU_069513_0_0_6"/>
<dbReference type="OMA" id="YRLSTPQ"/>
<dbReference type="Proteomes" id="UP000000558">
    <property type="component" value="Chromosome"/>
</dbReference>
<dbReference type="Proteomes" id="UP000002519">
    <property type="component" value="Chromosome"/>
</dbReference>
<dbReference type="GO" id="GO:0008234">
    <property type="term" value="F:cysteine-type peptidase activity"/>
    <property type="evidence" value="ECO:0007669"/>
    <property type="project" value="UniProtKB-KW"/>
</dbReference>
<dbReference type="GO" id="GO:0006508">
    <property type="term" value="P:proteolysis"/>
    <property type="evidence" value="ECO:0007669"/>
    <property type="project" value="UniProtKB-KW"/>
</dbReference>
<dbReference type="Gene3D" id="3.40.395.10">
    <property type="entry name" value="Adenoviral Proteinase, Chain A"/>
    <property type="match status" value="1"/>
</dbReference>
<dbReference type="InterPro" id="IPR054329">
    <property type="entry name" value="ElaD/SseL-like_N"/>
</dbReference>
<dbReference type="InterPro" id="IPR038765">
    <property type="entry name" value="Papain-like_cys_pep_sf"/>
</dbReference>
<dbReference type="InterPro" id="IPR003653">
    <property type="entry name" value="Peptidase_C48_C"/>
</dbReference>
<dbReference type="NCBIfam" id="NF008812">
    <property type="entry name" value="PRK11836.1"/>
    <property type="match status" value="1"/>
</dbReference>
<dbReference type="Pfam" id="PF22103">
    <property type="entry name" value="ElaD_SseL-like_N"/>
    <property type="match status" value="1"/>
</dbReference>
<dbReference type="Pfam" id="PF02902">
    <property type="entry name" value="Peptidase_C48"/>
    <property type="match status" value="1"/>
</dbReference>
<dbReference type="SUPFAM" id="SSF54001">
    <property type="entry name" value="Cysteine proteinases"/>
    <property type="match status" value="1"/>
</dbReference>
<organism>
    <name type="scientific">Escherichia coli O157:H7</name>
    <dbReference type="NCBI Taxonomy" id="83334"/>
    <lineage>
        <taxon>Bacteria</taxon>
        <taxon>Pseudomonadati</taxon>
        <taxon>Pseudomonadota</taxon>
        <taxon>Gammaproteobacteria</taxon>
        <taxon>Enterobacterales</taxon>
        <taxon>Enterobacteriaceae</taxon>
        <taxon>Escherichia</taxon>
    </lineage>
</organism>
<comment type="function">
    <text evidence="2">Protease that can act as an efficient and specific deubiquitinating enzyme in vitro. Does not possess desumoylating and deneddylating activities. The physiological substrate is unknown.</text>
</comment>
<comment type="similarity">
    <text evidence="3">Belongs to the peptidase C79 family.</text>
</comment>
<comment type="sequence caution" evidence="3">
    <conflict type="erroneous initiation">
        <sequence resource="EMBL-CDS" id="BAB36580"/>
    </conflict>
    <text>Truncated N-terminus.</text>
</comment>
<reference key="1">
    <citation type="journal article" date="2001" name="Nature">
        <title>Genome sequence of enterohaemorrhagic Escherichia coli O157:H7.</title>
        <authorList>
            <person name="Perna N.T."/>
            <person name="Plunkett G. III"/>
            <person name="Burland V."/>
            <person name="Mau B."/>
            <person name="Glasner J.D."/>
            <person name="Rose D.J."/>
            <person name="Mayhew G.F."/>
            <person name="Evans P.S."/>
            <person name="Gregor J."/>
            <person name="Kirkpatrick H.A."/>
            <person name="Posfai G."/>
            <person name="Hackett J."/>
            <person name="Klink S."/>
            <person name="Boutin A."/>
            <person name="Shao Y."/>
            <person name="Miller L."/>
            <person name="Grotbeck E.J."/>
            <person name="Davis N.W."/>
            <person name="Lim A."/>
            <person name="Dimalanta E.T."/>
            <person name="Potamousis K."/>
            <person name="Apodaca J."/>
            <person name="Anantharaman T.S."/>
            <person name="Lin J."/>
            <person name="Yen G."/>
            <person name="Schwartz D.C."/>
            <person name="Welch R.A."/>
            <person name="Blattner F.R."/>
        </authorList>
    </citation>
    <scope>NUCLEOTIDE SEQUENCE [LARGE SCALE GENOMIC DNA]</scope>
    <source>
        <strain>O157:H7 / EDL933 / ATCC 700927 / EHEC</strain>
    </source>
</reference>
<reference key="2">
    <citation type="journal article" date="2001" name="DNA Res.">
        <title>Complete genome sequence of enterohemorrhagic Escherichia coli O157:H7 and genomic comparison with a laboratory strain K-12.</title>
        <authorList>
            <person name="Hayashi T."/>
            <person name="Makino K."/>
            <person name="Ohnishi M."/>
            <person name="Kurokawa K."/>
            <person name="Ishii K."/>
            <person name="Yokoyama K."/>
            <person name="Han C.-G."/>
            <person name="Ohtsubo E."/>
            <person name="Nakayama K."/>
            <person name="Murata T."/>
            <person name="Tanaka M."/>
            <person name="Tobe T."/>
            <person name="Iida T."/>
            <person name="Takami H."/>
            <person name="Honda T."/>
            <person name="Sasakawa C."/>
            <person name="Ogasawara N."/>
            <person name="Yasunaga T."/>
            <person name="Kuhara S."/>
            <person name="Shiba T."/>
            <person name="Hattori M."/>
            <person name="Shinagawa H."/>
        </authorList>
    </citation>
    <scope>NUCLEOTIDE SEQUENCE [LARGE SCALE GENOMIC DNA]</scope>
    <source>
        <strain>O157:H7 / Sakai / RIMD 0509952 / EHEC</strain>
    </source>
</reference>